<proteinExistence type="evidence at protein level"/>
<comment type="function">
    <text evidence="1">Catalyzes the condensation of (S)-aspartate-beta-semialdehyde [(S)-ASA] and pyruvate to 4-hydroxy-tetrahydrodipicolinate (HTPA).</text>
</comment>
<comment type="catalytic activity">
    <reaction>
        <text>L-aspartate 4-semialdehyde + pyruvate = (2S,4S)-4-hydroxy-2,3,4,5-tetrahydrodipicolinate + H2O + H(+)</text>
        <dbReference type="Rhea" id="RHEA:34171"/>
        <dbReference type="ChEBI" id="CHEBI:15361"/>
        <dbReference type="ChEBI" id="CHEBI:15377"/>
        <dbReference type="ChEBI" id="CHEBI:15378"/>
        <dbReference type="ChEBI" id="CHEBI:67139"/>
        <dbReference type="ChEBI" id="CHEBI:537519"/>
        <dbReference type="EC" id="4.3.3.7"/>
    </reaction>
</comment>
<comment type="pathway">
    <text>Amino-acid biosynthesis; L-lysine biosynthesis via DAP pathway; (S)-tetrahydrodipicolinate from L-aspartate: step 3/4.</text>
</comment>
<comment type="subcellular location">
    <subcellularLocation>
        <location>Plastid</location>
        <location>Chloroplast</location>
    </subcellularLocation>
</comment>
<comment type="alternative products">
    <event type="alternative splicing"/>
    <isoform>
        <id>Q9LZX6-1</id>
        <name>1</name>
        <sequence type="displayed"/>
    </isoform>
    <isoform>
        <id>Q9LZX6-2</id>
        <name>2</name>
        <sequence type="described" ref="VSP_009000"/>
    </isoform>
</comment>
<comment type="miscellaneous">
    <molecule>Isoform 1</molecule>
    <text>May be due to a competing acceptor splice site.</text>
</comment>
<comment type="similarity">
    <text evidence="5">Belongs to the DapA family.</text>
</comment>
<comment type="caution">
    <text evidence="5">Was originally thought to be a dihydrodipicolinate synthase (DHDPS), catalyzing the condensation of (S)-aspartate-beta-semialdehyde [(S)-ASA] and pyruvate to dihydrodipicolinate (DHDP). However, it was shown in E.coli that the product of the enzymatic reaction is not dihydrodipicolinate but in fact (4S)-4-hydroxy-2,3,4,5-tetrahydro-(2S)-dipicolinic acid (HTPA), and that the consecutive dehydration reaction leading to DHDP is not spontaneous but catalyzed by DapB.</text>
</comment>
<evidence type="ECO:0000250" key="1"/>
<evidence type="ECO:0000255" key="2"/>
<evidence type="ECO:0000303" key="3">
    <source>
    </source>
</evidence>
<evidence type="ECO:0000303" key="4">
    <source ref="5"/>
</evidence>
<evidence type="ECO:0000305" key="5"/>
<evidence type="ECO:0007829" key="6">
    <source>
        <dbReference type="PDB" id="7MDS"/>
    </source>
</evidence>
<dbReference type="EC" id="4.3.3.7"/>
<dbReference type="EMBL" id="X72971">
    <property type="protein sequence ID" value="CAB45642.1"/>
    <property type="molecule type" value="mRNA"/>
</dbReference>
<dbReference type="EMBL" id="AL162295">
    <property type="protein sequence ID" value="CAB82692.1"/>
    <property type="molecule type" value="Genomic_DNA"/>
</dbReference>
<dbReference type="EMBL" id="CP002686">
    <property type="protein sequence ID" value="AEE80120.1"/>
    <property type="molecule type" value="Genomic_DNA"/>
</dbReference>
<dbReference type="EMBL" id="CP002686">
    <property type="protein sequence ID" value="AEE80121.1"/>
    <property type="molecule type" value="Genomic_DNA"/>
</dbReference>
<dbReference type="EMBL" id="AY063943">
    <property type="protein sequence ID" value="AAL36299.1"/>
    <property type="molecule type" value="mRNA"/>
</dbReference>
<dbReference type="EMBL" id="AY096442">
    <property type="protein sequence ID" value="AAM20082.1"/>
    <property type="molecule type" value="mRNA"/>
</dbReference>
<dbReference type="EMBL" id="AY087718">
    <property type="protein sequence ID" value="AAM65255.1"/>
    <property type="molecule type" value="mRNA"/>
</dbReference>
<dbReference type="EMBL" id="X98080">
    <property type="protein sequence ID" value="CAA66703.1"/>
    <property type="molecule type" value="Genomic_DNA"/>
</dbReference>
<dbReference type="PIR" id="S46304">
    <property type="entry name" value="S46304"/>
</dbReference>
<dbReference type="PIR" id="T47899">
    <property type="entry name" value="T47899"/>
</dbReference>
<dbReference type="RefSeq" id="NP_191647.1">
    <molecule id="Q9LZX6-2"/>
    <property type="nucleotide sequence ID" value="NM_115952.2"/>
</dbReference>
<dbReference type="RefSeq" id="NP_850730.1">
    <molecule id="Q9LZX6-1"/>
    <property type="nucleotide sequence ID" value="NM_180399.3"/>
</dbReference>
<dbReference type="PDB" id="6VVH">
    <property type="method" value="X-ray"/>
    <property type="resolution" value="1.79 A"/>
    <property type="chains" value="AAA/BBB/CCC/DDD=49-365"/>
</dbReference>
<dbReference type="PDB" id="6VVI">
    <property type="method" value="X-ray"/>
    <property type="resolution" value="2.15 A"/>
    <property type="chains" value="AAA/BBB/CCC/DDD=49-365"/>
</dbReference>
<dbReference type="PDB" id="7MDS">
    <property type="method" value="X-ray"/>
    <property type="resolution" value="2.29 A"/>
    <property type="chains" value="A/B=49-365"/>
</dbReference>
<dbReference type="PDBsum" id="6VVH"/>
<dbReference type="PDBsum" id="6VVI"/>
<dbReference type="PDBsum" id="7MDS"/>
<dbReference type="SMR" id="Q9LZX6"/>
<dbReference type="BioGRID" id="10573">
    <property type="interactions" value="2"/>
</dbReference>
<dbReference type="FunCoup" id="Q9LZX6">
    <property type="interactions" value="629"/>
</dbReference>
<dbReference type="STRING" id="3702.Q9LZX6"/>
<dbReference type="BindingDB" id="Q9LZX6"/>
<dbReference type="ChEMBL" id="CHEMBL5465361"/>
<dbReference type="PaxDb" id="3702-AT3G60880.2"/>
<dbReference type="ProteomicsDB" id="224706">
    <molecule id="Q9LZX6-1"/>
</dbReference>
<dbReference type="EnsemblPlants" id="AT3G60880.1">
    <molecule id="Q9LZX6-2"/>
    <property type="protein sequence ID" value="AT3G60880.1"/>
    <property type="gene ID" value="AT3G60880"/>
</dbReference>
<dbReference type="EnsemblPlants" id="AT3G60880.2">
    <molecule id="Q9LZX6-1"/>
    <property type="protein sequence ID" value="AT3G60880.2"/>
    <property type="gene ID" value="AT3G60880"/>
</dbReference>
<dbReference type="GeneID" id="825259"/>
<dbReference type="Gramene" id="AT3G60880.1">
    <molecule id="Q9LZX6-2"/>
    <property type="protein sequence ID" value="AT3G60880.1"/>
    <property type="gene ID" value="AT3G60880"/>
</dbReference>
<dbReference type="Gramene" id="AT3G60880.2">
    <molecule id="Q9LZX6-1"/>
    <property type="protein sequence ID" value="AT3G60880.2"/>
    <property type="gene ID" value="AT3G60880"/>
</dbReference>
<dbReference type="KEGG" id="ath:AT3G60880"/>
<dbReference type="Araport" id="AT3G60880"/>
<dbReference type="TAIR" id="AT3G60880">
    <property type="gene designation" value="DHDPS1"/>
</dbReference>
<dbReference type="eggNOG" id="ENOG502QQ8M">
    <property type="taxonomic scope" value="Eukaryota"/>
</dbReference>
<dbReference type="InParanoid" id="Q9LZX6"/>
<dbReference type="OMA" id="THDEHCR"/>
<dbReference type="PhylomeDB" id="Q9LZX6"/>
<dbReference type="BioCyc" id="ARA:AT3G60880-MONOMER"/>
<dbReference type="UniPathway" id="UPA00034">
    <property type="reaction ID" value="UER00017"/>
</dbReference>
<dbReference type="PRO" id="PR:Q9LZX6"/>
<dbReference type="Proteomes" id="UP000006548">
    <property type="component" value="Chromosome 3"/>
</dbReference>
<dbReference type="ExpressionAtlas" id="Q9LZX6">
    <property type="expression patterns" value="baseline and differential"/>
</dbReference>
<dbReference type="GO" id="GO:0009507">
    <property type="term" value="C:chloroplast"/>
    <property type="evidence" value="ECO:0007669"/>
    <property type="project" value="UniProtKB-SubCell"/>
</dbReference>
<dbReference type="GO" id="GO:0008840">
    <property type="term" value="F:4-hydroxy-tetrahydrodipicolinate synthase activity"/>
    <property type="evidence" value="ECO:0000314"/>
    <property type="project" value="TAIR"/>
</dbReference>
<dbReference type="GO" id="GO:0019877">
    <property type="term" value="P:diaminopimelate biosynthetic process"/>
    <property type="evidence" value="ECO:0007669"/>
    <property type="project" value="UniProtKB-KW"/>
</dbReference>
<dbReference type="GO" id="GO:0009089">
    <property type="term" value="P:lysine biosynthetic process via diaminopimelate"/>
    <property type="evidence" value="ECO:0007669"/>
    <property type="project" value="UniProtKB-UniPathway"/>
</dbReference>
<dbReference type="CDD" id="cd00950">
    <property type="entry name" value="DHDPS"/>
    <property type="match status" value="1"/>
</dbReference>
<dbReference type="FunFam" id="3.20.20.70:FF:000206">
    <property type="entry name" value="4-hydroxy-tetrahydrodipicolinate synthase 2, chloroplastic"/>
    <property type="match status" value="1"/>
</dbReference>
<dbReference type="Gene3D" id="3.20.20.70">
    <property type="entry name" value="Aldolase class I"/>
    <property type="match status" value="1"/>
</dbReference>
<dbReference type="HAMAP" id="MF_00418">
    <property type="entry name" value="DapA"/>
    <property type="match status" value="1"/>
</dbReference>
<dbReference type="InterPro" id="IPR013785">
    <property type="entry name" value="Aldolase_TIM"/>
</dbReference>
<dbReference type="InterPro" id="IPR005263">
    <property type="entry name" value="DapA"/>
</dbReference>
<dbReference type="InterPro" id="IPR002220">
    <property type="entry name" value="DapA-like"/>
</dbReference>
<dbReference type="InterPro" id="IPR020625">
    <property type="entry name" value="Schiff_base-form_aldolases_AS"/>
</dbReference>
<dbReference type="InterPro" id="IPR020624">
    <property type="entry name" value="Schiff_base-form_aldolases_CS"/>
</dbReference>
<dbReference type="NCBIfam" id="TIGR00674">
    <property type="entry name" value="dapA"/>
    <property type="match status" value="1"/>
</dbReference>
<dbReference type="PANTHER" id="PTHR12128:SF15">
    <property type="entry name" value="4-HYDROXY-TETRAHYDRODIPICOLINATE SYNTHASE 1, CHLOROPLASTIC"/>
    <property type="match status" value="1"/>
</dbReference>
<dbReference type="PANTHER" id="PTHR12128">
    <property type="entry name" value="DIHYDRODIPICOLINATE SYNTHASE"/>
    <property type="match status" value="1"/>
</dbReference>
<dbReference type="Pfam" id="PF00701">
    <property type="entry name" value="DHDPS"/>
    <property type="match status" value="1"/>
</dbReference>
<dbReference type="PRINTS" id="PR00146">
    <property type="entry name" value="DHPICSNTHASE"/>
</dbReference>
<dbReference type="SMART" id="SM01130">
    <property type="entry name" value="DHDPS"/>
    <property type="match status" value="1"/>
</dbReference>
<dbReference type="SUPFAM" id="SSF51569">
    <property type="entry name" value="Aldolase"/>
    <property type="match status" value="1"/>
</dbReference>
<dbReference type="PROSITE" id="PS00665">
    <property type="entry name" value="DHDPS_1"/>
    <property type="match status" value="1"/>
</dbReference>
<dbReference type="PROSITE" id="PS00666">
    <property type="entry name" value="DHDPS_2"/>
    <property type="match status" value="1"/>
</dbReference>
<feature type="transit peptide" description="Chloroplast" evidence="2">
    <location>
        <begin position="1"/>
        <end position="39"/>
    </location>
</feature>
<feature type="chain" id="PRO_0000007197" description="4-hydroxy-tetrahydrodipicolinate synthase 1, chloroplastic">
    <location>
        <begin position="40"/>
        <end position="365"/>
    </location>
</feature>
<feature type="active site" description="Proton donor/acceptor" evidence="1">
    <location>
        <position position="194"/>
    </location>
</feature>
<feature type="active site" description="Schiff-base intermediate with substrate" evidence="1">
    <location>
        <position position="222"/>
    </location>
</feature>
<feature type="binding site" evidence="1">
    <location>
        <position position="108"/>
    </location>
    <ligand>
        <name>pyruvate</name>
        <dbReference type="ChEBI" id="CHEBI:15361"/>
    </ligand>
</feature>
<feature type="binding site" evidence="1">
    <location>
        <position position="261"/>
    </location>
    <ligand>
        <name>pyruvate</name>
        <dbReference type="ChEBI" id="CHEBI:15361"/>
    </ligand>
</feature>
<feature type="site" description="Part of a proton relay during catalysis" evidence="1">
    <location>
        <position position="107"/>
    </location>
</feature>
<feature type="site" description="Part of a proton relay during catalysis" evidence="1">
    <location>
        <position position="170"/>
    </location>
</feature>
<feature type="splice variant" id="VSP_009000" description="In isoform 2." evidence="3 4">
    <location>
        <position position="30"/>
    </location>
</feature>
<feature type="sequence conflict" description="In Ref. 1; CAB45642." evidence="5" ref="1">
    <original>A</original>
    <variation>E</variation>
    <location>
        <position position="286"/>
    </location>
</feature>
<feature type="helix" evidence="6">
    <location>
        <begin position="60"/>
        <end position="64"/>
    </location>
</feature>
<feature type="strand" evidence="6">
    <location>
        <begin position="68"/>
        <end position="71"/>
    </location>
</feature>
<feature type="strand" evidence="6">
    <location>
        <begin position="80"/>
        <end position="82"/>
    </location>
</feature>
<feature type="helix" evidence="6">
    <location>
        <begin position="84"/>
        <end position="96"/>
    </location>
</feature>
<feature type="strand" evidence="6">
    <location>
        <begin position="101"/>
        <end position="106"/>
    </location>
</feature>
<feature type="turn" evidence="6">
    <location>
        <begin position="107"/>
        <end position="110"/>
    </location>
</feature>
<feature type="helix" evidence="6">
    <location>
        <begin position="111"/>
        <end position="113"/>
    </location>
</feature>
<feature type="helix" evidence="6">
    <location>
        <begin position="116"/>
        <end position="130"/>
    </location>
</feature>
<feature type="turn" evidence="6">
    <location>
        <begin position="131"/>
        <end position="133"/>
    </location>
</feature>
<feature type="strand" evidence="6">
    <location>
        <begin position="134"/>
        <end position="139"/>
    </location>
</feature>
<feature type="helix" evidence="6">
    <location>
        <begin position="145"/>
        <end position="157"/>
    </location>
</feature>
<feature type="strand" evidence="6">
    <location>
        <begin position="161"/>
        <end position="166"/>
    </location>
</feature>
<feature type="helix" evidence="6">
    <location>
        <begin position="175"/>
        <end position="186"/>
    </location>
</feature>
<feature type="strand" evidence="6">
    <location>
        <begin position="191"/>
        <end position="195"/>
    </location>
</feature>
<feature type="helix" evidence="6">
    <location>
        <begin position="197"/>
        <end position="200"/>
    </location>
</feature>
<feature type="helix" evidence="6">
    <location>
        <begin position="206"/>
        <end position="213"/>
    </location>
</feature>
<feature type="strand" evidence="6">
    <location>
        <begin position="218"/>
        <end position="223"/>
    </location>
</feature>
<feature type="helix" evidence="6">
    <location>
        <begin position="227"/>
        <end position="234"/>
    </location>
</feature>
<feature type="turn" evidence="6">
    <location>
        <begin position="235"/>
        <end position="237"/>
    </location>
</feature>
<feature type="strand" evidence="6">
    <location>
        <begin position="240"/>
        <end position="243"/>
    </location>
</feature>
<feature type="helix" evidence="6">
    <location>
        <begin position="245"/>
        <end position="254"/>
    </location>
</feature>
<feature type="strand" evidence="6">
    <location>
        <begin position="259"/>
        <end position="263"/>
    </location>
</feature>
<feature type="helix" evidence="6">
    <location>
        <begin position="264"/>
        <end position="266"/>
    </location>
</feature>
<feature type="helix" evidence="6">
    <location>
        <begin position="269"/>
        <end position="277"/>
    </location>
</feature>
<feature type="helix" evidence="6">
    <location>
        <begin position="282"/>
        <end position="295"/>
    </location>
</feature>
<feature type="strand" evidence="6">
    <location>
        <begin position="297"/>
        <end position="299"/>
    </location>
</feature>
<feature type="helix" evidence="6">
    <location>
        <begin position="302"/>
        <end position="310"/>
    </location>
</feature>
<feature type="strand" evidence="6">
    <location>
        <begin position="316"/>
        <end position="319"/>
    </location>
</feature>
<feature type="helix" evidence="6">
    <location>
        <begin position="327"/>
        <end position="340"/>
    </location>
</feature>
<feature type="helix" evidence="6">
    <location>
        <begin position="342"/>
        <end position="344"/>
    </location>
</feature>
<feature type="strand" evidence="6">
    <location>
        <begin position="345"/>
        <end position="349"/>
    </location>
</feature>
<feature type="helix" evidence="6">
    <location>
        <begin position="356"/>
        <end position="358"/>
    </location>
</feature>
<feature type="strand" evidence="6">
    <location>
        <begin position="360"/>
        <end position="363"/>
    </location>
</feature>
<gene>
    <name type="primary">DHDPS1</name>
    <name type="synonym">DHDPS</name>
    <name type="synonym">DHPS1</name>
    <name type="ordered locus">At3g60880</name>
    <name type="ORF">T4C21_290</name>
</gene>
<sequence>MSALKNYGLISIDSALHFPRSNQLQSYKRRNAKWVSPIAAVVPNFHLPMRSLEDKNRTNTDDIRSLRVITAIKTPYLPDGRFDLQAYDDLVNTQIENGAEGVIVGGTTGEGQLMSWDEHIMLIGHTVNCFGGRIKVIGNTGSNSTREAIHATEQGFAMGMHGALHINPYYGKTSIEGMNAHFQTVLHMGPTIIYNVPGRTCQDIPPQVIFKLSQNPNMAGVKECVGNNRVEEYTEKGIVVWSGNDDQCHDSRWDHGATGVISVTSNLVPGLMRKLMFEGRNSALNAKLLPLMDWLFQEPNPIGVNTALAQLGVARPVFRLPYVPLPLSKRIEFVKLVKEIGREHFVGDRDVQVLDDDDFILIGRY</sequence>
<keyword id="KW-0002">3D-structure</keyword>
<keyword id="KW-0021">Allosteric enzyme</keyword>
<keyword id="KW-0025">Alternative splicing</keyword>
<keyword id="KW-0028">Amino-acid biosynthesis</keyword>
<keyword id="KW-0150">Chloroplast</keyword>
<keyword id="KW-0220">Diaminopimelate biosynthesis</keyword>
<keyword id="KW-0456">Lyase</keyword>
<keyword id="KW-0457">Lysine biosynthesis</keyword>
<keyword id="KW-0934">Plastid</keyword>
<keyword id="KW-1185">Reference proteome</keyword>
<keyword id="KW-0704">Schiff base</keyword>
<keyword id="KW-0809">Transit peptide</keyword>
<organism>
    <name type="scientific">Arabidopsis thaliana</name>
    <name type="common">Mouse-ear cress</name>
    <dbReference type="NCBI Taxonomy" id="3702"/>
    <lineage>
        <taxon>Eukaryota</taxon>
        <taxon>Viridiplantae</taxon>
        <taxon>Streptophyta</taxon>
        <taxon>Embryophyta</taxon>
        <taxon>Tracheophyta</taxon>
        <taxon>Spermatophyta</taxon>
        <taxon>Magnoliopsida</taxon>
        <taxon>eudicotyledons</taxon>
        <taxon>Gunneridae</taxon>
        <taxon>Pentapetalae</taxon>
        <taxon>rosids</taxon>
        <taxon>malvids</taxon>
        <taxon>Brassicales</taxon>
        <taxon>Brassicaceae</taxon>
        <taxon>Camelineae</taxon>
        <taxon>Arabidopsis</taxon>
    </lineage>
</organism>
<accession>Q9LZX6</accession>
<accession>O49355</accession>
<accession>Q8VZQ1</accession>
<accession>Q9SW58</accession>
<reference key="1">
    <citation type="journal article" date="1994" name="Plant Mol. Biol.">
        <title>Isolation of a poplar and an Arabidopsis thaliana dihydrodipicolinate synthase cDNA clone.</title>
        <authorList>
            <person name="Vauterin M."/>
            <person name="Jacobs M."/>
        </authorList>
    </citation>
    <scope>NUCLEOTIDE SEQUENCE [MRNA] (ISOFORM 2)</scope>
</reference>
<reference key="2">
    <citation type="journal article" date="2000" name="Nature">
        <title>Sequence and analysis of chromosome 3 of the plant Arabidopsis thaliana.</title>
        <authorList>
            <person name="Salanoubat M."/>
            <person name="Lemcke K."/>
            <person name="Rieger M."/>
            <person name="Ansorge W."/>
            <person name="Unseld M."/>
            <person name="Fartmann B."/>
            <person name="Valle G."/>
            <person name="Bloecker H."/>
            <person name="Perez-Alonso M."/>
            <person name="Obermaier B."/>
            <person name="Delseny M."/>
            <person name="Boutry M."/>
            <person name="Grivell L.A."/>
            <person name="Mache R."/>
            <person name="Puigdomenech P."/>
            <person name="De Simone V."/>
            <person name="Choisne N."/>
            <person name="Artiguenave F."/>
            <person name="Robert C."/>
            <person name="Brottier P."/>
            <person name="Wincker P."/>
            <person name="Cattolico L."/>
            <person name="Weissenbach J."/>
            <person name="Saurin W."/>
            <person name="Quetier F."/>
            <person name="Schaefer M."/>
            <person name="Mueller-Auer S."/>
            <person name="Gabel C."/>
            <person name="Fuchs M."/>
            <person name="Benes V."/>
            <person name="Wurmbach E."/>
            <person name="Drzonek H."/>
            <person name="Erfle H."/>
            <person name="Jordan N."/>
            <person name="Bangert S."/>
            <person name="Wiedelmann R."/>
            <person name="Kranz H."/>
            <person name="Voss H."/>
            <person name="Holland R."/>
            <person name="Brandt P."/>
            <person name="Nyakatura G."/>
            <person name="Vezzi A."/>
            <person name="D'Angelo M."/>
            <person name="Pallavicini A."/>
            <person name="Toppo S."/>
            <person name="Simionati B."/>
            <person name="Conrad A."/>
            <person name="Hornischer K."/>
            <person name="Kauer G."/>
            <person name="Loehnert T.-H."/>
            <person name="Nordsiek G."/>
            <person name="Reichelt J."/>
            <person name="Scharfe M."/>
            <person name="Schoen O."/>
            <person name="Bargues M."/>
            <person name="Terol J."/>
            <person name="Climent J."/>
            <person name="Navarro P."/>
            <person name="Collado C."/>
            <person name="Perez-Perez A."/>
            <person name="Ottenwaelder B."/>
            <person name="Duchemin D."/>
            <person name="Cooke R."/>
            <person name="Laudie M."/>
            <person name="Berger-Llauro C."/>
            <person name="Purnelle B."/>
            <person name="Masuy D."/>
            <person name="de Haan M."/>
            <person name="Maarse A.C."/>
            <person name="Alcaraz J.-P."/>
            <person name="Cottet A."/>
            <person name="Casacuberta E."/>
            <person name="Monfort A."/>
            <person name="Argiriou A."/>
            <person name="Flores M."/>
            <person name="Liguori R."/>
            <person name="Vitale D."/>
            <person name="Mannhaupt G."/>
            <person name="Haase D."/>
            <person name="Schoof H."/>
            <person name="Rudd S."/>
            <person name="Zaccaria P."/>
            <person name="Mewes H.-W."/>
            <person name="Mayer K.F.X."/>
            <person name="Kaul S."/>
            <person name="Town C.D."/>
            <person name="Koo H.L."/>
            <person name="Tallon L.J."/>
            <person name="Jenkins J."/>
            <person name="Rooney T."/>
            <person name="Rizzo M."/>
            <person name="Walts A."/>
            <person name="Utterback T."/>
            <person name="Fujii C.Y."/>
            <person name="Shea T.P."/>
            <person name="Creasy T.H."/>
            <person name="Haas B."/>
            <person name="Maiti R."/>
            <person name="Wu D."/>
            <person name="Peterson J."/>
            <person name="Van Aken S."/>
            <person name="Pai G."/>
            <person name="Militscher J."/>
            <person name="Sellers P."/>
            <person name="Gill J.E."/>
            <person name="Feldblyum T.V."/>
            <person name="Preuss D."/>
            <person name="Lin X."/>
            <person name="Nierman W.C."/>
            <person name="Salzberg S.L."/>
            <person name="White O."/>
            <person name="Venter J.C."/>
            <person name="Fraser C.M."/>
            <person name="Kaneko T."/>
            <person name="Nakamura Y."/>
            <person name="Sato S."/>
            <person name="Kato T."/>
            <person name="Asamizu E."/>
            <person name="Sasamoto S."/>
            <person name="Kimura T."/>
            <person name="Idesawa K."/>
            <person name="Kawashima K."/>
            <person name="Kishida Y."/>
            <person name="Kiyokawa C."/>
            <person name="Kohara M."/>
            <person name="Matsumoto M."/>
            <person name="Matsuno A."/>
            <person name="Muraki A."/>
            <person name="Nakayama S."/>
            <person name="Nakazaki N."/>
            <person name="Shinpo S."/>
            <person name="Takeuchi C."/>
            <person name="Wada T."/>
            <person name="Watanabe A."/>
            <person name="Yamada M."/>
            <person name="Yasuda M."/>
            <person name="Tabata S."/>
        </authorList>
    </citation>
    <scope>NUCLEOTIDE SEQUENCE [LARGE SCALE GENOMIC DNA]</scope>
    <source>
        <strain>cv. Columbia</strain>
    </source>
</reference>
<reference key="3">
    <citation type="journal article" date="2017" name="Plant J.">
        <title>Araport11: a complete reannotation of the Arabidopsis thaliana reference genome.</title>
        <authorList>
            <person name="Cheng C.Y."/>
            <person name="Krishnakumar V."/>
            <person name="Chan A.P."/>
            <person name="Thibaud-Nissen F."/>
            <person name="Schobel S."/>
            <person name="Town C.D."/>
        </authorList>
    </citation>
    <scope>GENOME REANNOTATION</scope>
    <source>
        <strain>cv. Columbia</strain>
    </source>
</reference>
<reference key="4">
    <citation type="journal article" date="2003" name="Science">
        <title>Empirical analysis of transcriptional activity in the Arabidopsis genome.</title>
        <authorList>
            <person name="Yamada K."/>
            <person name="Lim J."/>
            <person name="Dale J.M."/>
            <person name="Chen H."/>
            <person name="Shinn P."/>
            <person name="Palm C.J."/>
            <person name="Southwick A.M."/>
            <person name="Wu H.C."/>
            <person name="Kim C.J."/>
            <person name="Nguyen M."/>
            <person name="Pham P.K."/>
            <person name="Cheuk R.F."/>
            <person name="Karlin-Newmann G."/>
            <person name="Liu S.X."/>
            <person name="Lam B."/>
            <person name="Sakano H."/>
            <person name="Wu T."/>
            <person name="Yu G."/>
            <person name="Miranda M."/>
            <person name="Quach H.L."/>
            <person name="Tripp M."/>
            <person name="Chang C.H."/>
            <person name="Lee J.M."/>
            <person name="Toriumi M.J."/>
            <person name="Chan M.M."/>
            <person name="Tang C.C."/>
            <person name="Onodera C.S."/>
            <person name="Deng J.M."/>
            <person name="Akiyama K."/>
            <person name="Ansari Y."/>
            <person name="Arakawa T."/>
            <person name="Banh J."/>
            <person name="Banno F."/>
            <person name="Bowser L."/>
            <person name="Brooks S.Y."/>
            <person name="Carninci P."/>
            <person name="Chao Q."/>
            <person name="Choy N."/>
            <person name="Enju A."/>
            <person name="Goldsmith A.D."/>
            <person name="Gurjal M."/>
            <person name="Hansen N.F."/>
            <person name="Hayashizaki Y."/>
            <person name="Johnson-Hopson C."/>
            <person name="Hsuan V.W."/>
            <person name="Iida K."/>
            <person name="Karnes M."/>
            <person name="Khan S."/>
            <person name="Koesema E."/>
            <person name="Ishida J."/>
            <person name="Jiang P.X."/>
            <person name="Jones T."/>
            <person name="Kawai J."/>
            <person name="Kamiya A."/>
            <person name="Meyers C."/>
            <person name="Nakajima M."/>
            <person name="Narusaka M."/>
            <person name="Seki M."/>
            <person name="Sakurai T."/>
            <person name="Satou M."/>
            <person name="Tamse R."/>
            <person name="Vaysberg M."/>
            <person name="Wallender E.K."/>
            <person name="Wong C."/>
            <person name="Yamamura Y."/>
            <person name="Yuan S."/>
            <person name="Shinozaki K."/>
            <person name="Davis R.W."/>
            <person name="Theologis A."/>
            <person name="Ecker J.R."/>
        </authorList>
    </citation>
    <scope>NUCLEOTIDE SEQUENCE [LARGE SCALE MRNA] (ISOFORM 1)</scope>
    <source>
        <strain>cv. Columbia</strain>
    </source>
</reference>
<reference key="5">
    <citation type="submission" date="2002-03" db="EMBL/GenBank/DDBJ databases">
        <title>Full-length cDNA from Arabidopsis thaliana.</title>
        <authorList>
            <person name="Brover V.V."/>
            <person name="Troukhan M.E."/>
            <person name="Alexandrov N.A."/>
            <person name="Lu Y.-P."/>
            <person name="Flavell R.B."/>
            <person name="Feldmann K.A."/>
        </authorList>
    </citation>
    <scope>NUCLEOTIDE SEQUENCE [LARGE SCALE MRNA] (ISOFORM 2)</scope>
</reference>
<reference key="6">
    <citation type="submission" date="1996-05" db="EMBL/GenBank/DDBJ databases">
        <authorList>
            <person name="Vauterin M."/>
        </authorList>
    </citation>
    <scope>NUCLEOTIDE SEQUENCE OF 1-159 (ISOFORM 2)</scope>
</reference>
<name>DAPA1_ARATH</name>
<protein>
    <recommendedName>
        <fullName>4-hydroxy-tetrahydrodipicolinate synthase 1, chloroplastic</fullName>
        <shortName>HTPA synthase 1</shortName>
        <ecNumber>4.3.3.7</ecNumber>
    </recommendedName>
</protein>